<reference key="1">
    <citation type="journal article" date="2009" name="Appl. Environ. Microbiol.">
        <title>Three genomes from the phylum Acidobacteria provide insight into the lifestyles of these microorganisms in soils.</title>
        <authorList>
            <person name="Ward N.L."/>
            <person name="Challacombe J.F."/>
            <person name="Janssen P.H."/>
            <person name="Henrissat B."/>
            <person name="Coutinho P.M."/>
            <person name="Wu M."/>
            <person name="Xie G."/>
            <person name="Haft D.H."/>
            <person name="Sait M."/>
            <person name="Badger J."/>
            <person name="Barabote R.D."/>
            <person name="Bradley B."/>
            <person name="Brettin T.S."/>
            <person name="Brinkac L.M."/>
            <person name="Bruce D."/>
            <person name="Creasy T."/>
            <person name="Daugherty S.C."/>
            <person name="Davidsen T.M."/>
            <person name="DeBoy R.T."/>
            <person name="Detter J.C."/>
            <person name="Dodson R.J."/>
            <person name="Durkin A.S."/>
            <person name="Ganapathy A."/>
            <person name="Gwinn-Giglio M."/>
            <person name="Han C.S."/>
            <person name="Khouri H."/>
            <person name="Kiss H."/>
            <person name="Kothari S.P."/>
            <person name="Madupu R."/>
            <person name="Nelson K.E."/>
            <person name="Nelson W.C."/>
            <person name="Paulsen I."/>
            <person name="Penn K."/>
            <person name="Ren Q."/>
            <person name="Rosovitz M.J."/>
            <person name="Selengut J.D."/>
            <person name="Shrivastava S."/>
            <person name="Sullivan S.A."/>
            <person name="Tapia R."/>
            <person name="Thompson L.S."/>
            <person name="Watkins K.L."/>
            <person name="Yang Q."/>
            <person name="Yu C."/>
            <person name="Zafar N."/>
            <person name="Zhou L."/>
            <person name="Kuske C.R."/>
        </authorList>
    </citation>
    <scope>NUCLEOTIDE SEQUENCE [LARGE SCALE GENOMIC DNA]</scope>
    <source>
        <strain>Ellin6076</strain>
    </source>
</reference>
<protein>
    <recommendedName>
        <fullName evidence="1">Argininosuccinate lyase</fullName>
        <shortName evidence="1">ASAL</shortName>
        <ecNumber evidence="1">4.3.2.1</ecNumber>
    </recommendedName>
    <alternativeName>
        <fullName evidence="1">Arginosuccinase</fullName>
    </alternativeName>
</protein>
<accession>Q024T3</accession>
<feature type="chain" id="PRO_1000000545" description="Argininosuccinate lyase">
    <location>
        <begin position="1"/>
        <end position="460"/>
    </location>
</feature>
<gene>
    <name evidence="1" type="primary">argH</name>
    <name type="ordered locus">Acid_2504</name>
</gene>
<evidence type="ECO:0000255" key="1">
    <source>
        <dbReference type="HAMAP-Rule" id="MF_00006"/>
    </source>
</evidence>
<sequence>MKLWGGRFESGPGEVFERFSGSLDFDRRLIDCDIRGSQAFARALENVGILTATERAQIVEAFDSIRAESLSPAFYEGATDEDVHTLVIRKLKERAGAVADKIHTGRSRNEQVSLDTRMWLREESTDLQAQLFAVMGRLLDLAEMYPHAIIPGYTHMRRAQAVLWPHYLLAYFEMFLRDWHRFGDARRRANVLPLGSGALAGSGFPLDREAMAQNLGFEGITQNSMDVSGDRDFALDFLYACTVTMIHLSRLAEDWILYSSEEFGWLELGDGVTSGSSLMPQKKNPDSLELIRGKSGRVVGCLTSLLVTMKGLPMTYNRDMQEDKIPIFDAADQLSGSLLMTSAVIESTRLNPARPAAAAEESWVVATDLAEALARAGTPFHQAHQIVGRFVLESVRANKKPSDWTAEEMHAFAPEFTPDFAALLNPAEGMKSREIPGGTGTAAVAAALAHARQLLGKLIV</sequence>
<proteinExistence type="inferred from homology"/>
<keyword id="KW-0028">Amino-acid biosynthesis</keyword>
<keyword id="KW-0055">Arginine biosynthesis</keyword>
<keyword id="KW-0963">Cytoplasm</keyword>
<keyword id="KW-0456">Lyase</keyword>
<dbReference type="EC" id="4.3.2.1" evidence="1"/>
<dbReference type="EMBL" id="CP000473">
    <property type="protein sequence ID" value="ABJ83493.1"/>
    <property type="molecule type" value="Genomic_DNA"/>
</dbReference>
<dbReference type="SMR" id="Q024T3"/>
<dbReference type="FunCoup" id="Q024T3">
    <property type="interactions" value="558"/>
</dbReference>
<dbReference type="STRING" id="234267.Acid_2504"/>
<dbReference type="KEGG" id="sus:Acid_2504"/>
<dbReference type="eggNOG" id="COG0165">
    <property type="taxonomic scope" value="Bacteria"/>
</dbReference>
<dbReference type="HOGENOM" id="CLU_027272_2_3_0"/>
<dbReference type="InParanoid" id="Q024T3"/>
<dbReference type="OrthoDB" id="9769623at2"/>
<dbReference type="UniPathway" id="UPA00068">
    <property type="reaction ID" value="UER00114"/>
</dbReference>
<dbReference type="GO" id="GO:0005829">
    <property type="term" value="C:cytosol"/>
    <property type="evidence" value="ECO:0007669"/>
    <property type="project" value="TreeGrafter"/>
</dbReference>
<dbReference type="GO" id="GO:0004056">
    <property type="term" value="F:argininosuccinate lyase activity"/>
    <property type="evidence" value="ECO:0007669"/>
    <property type="project" value="UniProtKB-UniRule"/>
</dbReference>
<dbReference type="GO" id="GO:0042450">
    <property type="term" value="P:arginine biosynthetic process via ornithine"/>
    <property type="evidence" value="ECO:0007669"/>
    <property type="project" value="InterPro"/>
</dbReference>
<dbReference type="GO" id="GO:0006526">
    <property type="term" value="P:L-arginine biosynthetic process"/>
    <property type="evidence" value="ECO:0007669"/>
    <property type="project" value="UniProtKB-UniRule"/>
</dbReference>
<dbReference type="CDD" id="cd01359">
    <property type="entry name" value="Argininosuccinate_lyase"/>
    <property type="match status" value="1"/>
</dbReference>
<dbReference type="FunFam" id="1.20.200.10:FF:000015">
    <property type="entry name" value="argininosuccinate lyase isoform X2"/>
    <property type="match status" value="1"/>
</dbReference>
<dbReference type="Gene3D" id="1.10.40.30">
    <property type="entry name" value="Fumarase/aspartase (C-terminal domain)"/>
    <property type="match status" value="1"/>
</dbReference>
<dbReference type="Gene3D" id="1.20.200.10">
    <property type="entry name" value="Fumarase/aspartase (Central domain)"/>
    <property type="match status" value="1"/>
</dbReference>
<dbReference type="Gene3D" id="1.10.275.10">
    <property type="entry name" value="Fumarase/aspartase (N-terminal domain)"/>
    <property type="match status" value="1"/>
</dbReference>
<dbReference type="HAMAP" id="MF_00006">
    <property type="entry name" value="Arg_succ_lyase"/>
    <property type="match status" value="1"/>
</dbReference>
<dbReference type="InterPro" id="IPR029419">
    <property type="entry name" value="Arg_succ_lyase_C"/>
</dbReference>
<dbReference type="InterPro" id="IPR009049">
    <property type="entry name" value="Argininosuccinate_lyase"/>
</dbReference>
<dbReference type="InterPro" id="IPR024083">
    <property type="entry name" value="Fumarase/histidase_N"/>
</dbReference>
<dbReference type="InterPro" id="IPR020557">
    <property type="entry name" value="Fumarate_lyase_CS"/>
</dbReference>
<dbReference type="InterPro" id="IPR000362">
    <property type="entry name" value="Fumarate_lyase_fam"/>
</dbReference>
<dbReference type="InterPro" id="IPR022761">
    <property type="entry name" value="Fumarate_lyase_N"/>
</dbReference>
<dbReference type="InterPro" id="IPR008948">
    <property type="entry name" value="L-Aspartase-like"/>
</dbReference>
<dbReference type="NCBIfam" id="TIGR00838">
    <property type="entry name" value="argH"/>
    <property type="match status" value="1"/>
</dbReference>
<dbReference type="PANTHER" id="PTHR43814">
    <property type="entry name" value="ARGININOSUCCINATE LYASE"/>
    <property type="match status" value="1"/>
</dbReference>
<dbReference type="PANTHER" id="PTHR43814:SF1">
    <property type="entry name" value="ARGININOSUCCINATE LYASE"/>
    <property type="match status" value="1"/>
</dbReference>
<dbReference type="Pfam" id="PF14698">
    <property type="entry name" value="ASL_C2"/>
    <property type="match status" value="1"/>
</dbReference>
<dbReference type="Pfam" id="PF00206">
    <property type="entry name" value="Lyase_1"/>
    <property type="match status" value="1"/>
</dbReference>
<dbReference type="PRINTS" id="PR00145">
    <property type="entry name" value="ARGSUCLYASE"/>
</dbReference>
<dbReference type="PRINTS" id="PR00149">
    <property type="entry name" value="FUMRATELYASE"/>
</dbReference>
<dbReference type="SUPFAM" id="SSF48557">
    <property type="entry name" value="L-aspartase-like"/>
    <property type="match status" value="1"/>
</dbReference>
<dbReference type="PROSITE" id="PS00163">
    <property type="entry name" value="FUMARATE_LYASES"/>
    <property type="match status" value="1"/>
</dbReference>
<name>ARLY_SOLUE</name>
<comment type="catalytic activity">
    <reaction evidence="1">
        <text>2-(N(omega)-L-arginino)succinate = fumarate + L-arginine</text>
        <dbReference type="Rhea" id="RHEA:24020"/>
        <dbReference type="ChEBI" id="CHEBI:29806"/>
        <dbReference type="ChEBI" id="CHEBI:32682"/>
        <dbReference type="ChEBI" id="CHEBI:57472"/>
        <dbReference type="EC" id="4.3.2.1"/>
    </reaction>
</comment>
<comment type="pathway">
    <text evidence="1">Amino-acid biosynthesis; L-arginine biosynthesis; L-arginine from L-ornithine and carbamoyl phosphate: step 3/3.</text>
</comment>
<comment type="subcellular location">
    <subcellularLocation>
        <location evidence="1">Cytoplasm</location>
    </subcellularLocation>
</comment>
<comment type="similarity">
    <text evidence="1">Belongs to the lyase 1 family. Argininosuccinate lyase subfamily.</text>
</comment>
<organism>
    <name type="scientific">Solibacter usitatus (strain Ellin6076)</name>
    <dbReference type="NCBI Taxonomy" id="234267"/>
    <lineage>
        <taxon>Bacteria</taxon>
        <taxon>Pseudomonadati</taxon>
        <taxon>Acidobacteriota</taxon>
        <taxon>Terriglobia</taxon>
        <taxon>Bryobacterales</taxon>
        <taxon>Solibacteraceae</taxon>
        <taxon>Candidatus Solibacter</taxon>
    </lineage>
</organism>